<keyword id="KW-0050">Antiport</keyword>
<keyword id="KW-0997">Cell inner membrane</keyword>
<keyword id="KW-1003">Cell membrane</keyword>
<keyword id="KW-0406">Ion transport</keyword>
<keyword id="KW-0472">Membrane</keyword>
<keyword id="KW-0630">Potassium</keyword>
<keyword id="KW-0633">Potassium transport</keyword>
<keyword id="KW-1185">Reference proteome</keyword>
<keyword id="KW-0812">Transmembrane</keyword>
<keyword id="KW-1133">Transmembrane helix</keyword>
<keyword id="KW-0813">Transport</keyword>
<organism>
    <name type="scientific">Cronobacter sakazakii (strain ATCC BAA-894)</name>
    <name type="common">Enterobacter sakazakii</name>
    <dbReference type="NCBI Taxonomy" id="290339"/>
    <lineage>
        <taxon>Bacteria</taxon>
        <taxon>Pseudomonadati</taxon>
        <taxon>Pseudomonadota</taxon>
        <taxon>Gammaproteobacteria</taxon>
        <taxon>Enterobacterales</taxon>
        <taxon>Enterobacteriaceae</taxon>
        <taxon>Cronobacter</taxon>
    </lineage>
</organism>
<reference key="1">
    <citation type="journal article" date="2010" name="PLoS ONE">
        <title>Genome sequence of Cronobacter sakazakii BAA-894 and comparative genomic hybridization analysis with other Cronobacter species.</title>
        <authorList>
            <person name="Kucerova E."/>
            <person name="Clifton S.W."/>
            <person name="Xia X.Q."/>
            <person name="Long F."/>
            <person name="Porwollik S."/>
            <person name="Fulton L."/>
            <person name="Fronick C."/>
            <person name="Minx P."/>
            <person name="Kyung K."/>
            <person name="Warren W."/>
            <person name="Fulton R."/>
            <person name="Feng D."/>
            <person name="Wollam A."/>
            <person name="Shah N."/>
            <person name="Bhonagiri V."/>
            <person name="Nash W.E."/>
            <person name="Hallsworth-Pepin K."/>
            <person name="Wilson R.K."/>
            <person name="McClelland M."/>
            <person name="Forsythe S.J."/>
        </authorList>
    </citation>
    <scope>NUCLEOTIDE SEQUENCE [LARGE SCALE GENOMIC DNA]</scope>
    <source>
        <strain>ATCC BAA-894</strain>
    </source>
</reference>
<name>NHAP2_CROS8</name>
<feature type="chain" id="PRO_1000064666" description="K(+)/H(+) antiporter NhaP2">
    <location>
        <begin position="1"/>
        <end position="576"/>
    </location>
</feature>
<feature type="transmembrane region" description="Helical" evidence="1">
    <location>
        <begin position="3"/>
        <end position="23"/>
    </location>
</feature>
<feature type="transmembrane region" description="Helical" evidence="1">
    <location>
        <begin position="30"/>
        <end position="50"/>
    </location>
</feature>
<feature type="transmembrane region" description="Helical" evidence="1">
    <location>
        <begin position="58"/>
        <end position="78"/>
    </location>
</feature>
<feature type="transmembrane region" description="Helical" evidence="1">
    <location>
        <begin position="87"/>
        <end position="107"/>
    </location>
</feature>
<feature type="transmembrane region" description="Helical" evidence="1">
    <location>
        <begin position="109"/>
        <end position="129"/>
    </location>
</feature>
<feature type="transmembrane region" description="Helical" evidence="1">
    <location>
        <begin position="185"/>
        <end position="205"/>
    </location>
</feature>
<feature type="transmembrane region" description="Helical" evidence="1">
    <location>
        <begin position="221"/>
        <end position="241"/>
    </location>
</feature>
<feature type="transmembrane region" description="Helical" evidence="1">
    <location>
        <begin position="280"/>
        <end position="300"/>
    </location>
</feature>
<feature type="transmembrane region" description="Helical" evidence="1">
    <location>
        <begin position="303"/>
        <end position="323"/>
    </location>
</feature>
<feature type="transmembrane region" description="Helical" evidence="1">
    <location>
        <begin position="334"/>
        <end position="354"/>
    </location>
</feature>
<feature type="transmembrane region" description="Helical" evidence="1">
    <location>
        <begin position="363"/>
        <end position="383"/>
    </location>
</feature>
<feature type="domain" description="RCK C-terminal" evidence="1">
    <location>
        <begin position="403"/>
        <end position="485"/>
    </location>
</feature>
<gene>
    <name evidence="1" type="primary">nhaP2</name>
    <name type="synonym">cvrA</name>
    <name type="ordered locus">ESA_01471</name>
</gene>
<proteinExistence type="inferred from homology"/>
<evidence type="ECO:0000255" key="1">
    <source>
        <dbReference type="HAMAP-Rule" id="MF_01075"/>
    </source>
</evidence>
<accession>A7MKD6</accession>
<sequence length="576" mass="61905">MDAGTIISLFILGSVLVTCSILLSSFSSRLGIPILVIFLAIGMLAGVDGVGGIPFDNYPFAYLISNLALAVILLDGGMRTQASSFKVALGPALSLATVGVLITSGLTGMAAAWLFHLDIMEGLLIGAIVGSTDAAAVFSLLGGKGLNERVSSTLEIESGSNDPMAVFLTITLISMIQEHQTALSWLFLVHIIQQFGLGILIGLGGGWLLLKTINRIPLPSGLYPLLALSGGIMVFSVTTALDGSGILAVYLCGFVLGNKPIRNRYGIQQTFDGLAWLAQIGMFLVLGLLVTPSHLLPIAIPALLLSLWMIFVARPLSIFTGLLPFRGFTLRERVFISWVGLRGAVPIILAVFPMMAGLPRANLFFDVAFFVVLVSLLFQGTTLGWAAKKAKVVVPEVGRPQSRVGLDIHPENPWEQFVYQLSADKWCVGAALRDLHMPKETRIAALFRENQLMHPTGSTRLREGDVLCVIGRERDLPALGKLFSQSPPVALDQRFFGDFILEADAKFSDVAFIYGLDDQSAVDQNRTIGEVVLALIGAAPVVGDQVDFAGMTWTVAEKENNQIRRIGLKVAEDSDE</sequence>
<dbReference type="EMBL" id="CP000783">
    <property type="protein sequence ID" value="ABU76729.1"/>
    <property type="molecule type" value="Genomic_DNA"/>
</dbReference>
<dbReference type="RefSeq" id="WP_004384991.1">
    <property type="nucleotide sequence ID" value="NC_009778.1"/>
</dbReference>
<dbReference type="SMR" id="A7MKD6"/>
<dbReference type="KEGG" id="esa:ESA_01471"/>
<dbReference type="PATRIC" id="fig|290339.8.peg.1304"/>
<dbReference type="HOGENOM" id="CLU_005912_9_2_6"/>
<dbReference type="Proteomes" id="UP000000260">
    <property type="component" value="Chromosome"/>
</dbReference>
<dbReference type="GO" id="GO:0005886">
    <property type="term" value="C:plasma membrane"/>
    <property type="evidence" value="ECO:0007669"/>
    <property type="project" value="UniProtKB-SubCell"/>
</dbReference>
<dbReference type="GO" id="GO:0050660">
    <property type="term" value="F:flavin adenine dinucleotide binding"/>
    <property type="evidence" value="ECO:0007669"/>
    <property type="project" value="InterPro"/>
</dbReference>
<dbReference type="GO" id="GO:0015386">
    <property type="term" value="F:potassium:proton antiporter activity"/>
    <property type="evidence" value="ECO:0007669"/>
    <property type="project" value="UniProtKB-UniRule"/>
</dbReference>
<dbReference type="GO" id="GO:0006884">
    <property type="term" value="P:cell volume homeostasis"/>
    <property type="evidence" value="ECO:0007669"/>
    <property type="project" value="InterPro"/>
</dbReference>
<dbReference type="FunFam" id="3.30.70.1450:FF:000007">
    <property type="entry name" value="K(+)/H(+) antiporter NhaP2"/>
    <property type="match status" value="1"/>
</dbReference>
<dbReference type="Gene3D" id="1.20.1530.20">
    <property type="match status" value="1"/>
</dbReference>
<dbReference type="Gene3D" id="3.30.465.10">
    <property type="match status" value="1"/>
</dbReference>
<dbReference type="Gene3D" id="3.30.70.1450">
    <property type="entry name" value="Regulator of K+ conductance, C-terminal domain"/>
    <property type="match status" value="1"/>
</dbReference>
<dbReference type="HAMAP" id="MF_01075">
    <property type="entry name" value="NhaP2"/>
    <property type="match status" value="1"/>
</dbReference>
<dbReference type="InterPro" id="IPR006153">
    <property type="entry name" value="Cation/H_exchanger_TM"/>
</dbReference>
<dbReference type="InterPro" id="IPR036318">
    <property type="entry name" value="FAD-bd_PCMH-like_sf"/>
</dbReference>
<dbReference type="InterPro" id="IPR016169">
    <property type="entry name" value="FAD-bd_PCMH_sub2"/>
</dbReference>
<dbReference type="InterPro" id="IPR038770">
    <property type="entry name" value="Na+/solute_symporter_sf"/>
</dbReference>
<dbReference type="InterPro" id="IPR023729">
    <property type="entry name" value="NhaP2"/>
</dbReference>
<dbReference type="InterPro" id="IPR006037">
    <property type="entry name" value="RCK_C"/>
</dbReference>
<dbReference type="InterPro" id="IPR036721">
    <property type="entry name" value="RCK_C_sf"/>
</dbReference>
<dbReference type="InterPro" id="IPR005170">
    <property type="entry name" value="Transptr-assoc_dom"/>
</dbReference>
<dbReference type="NCBIfam" id="NF003714">
    <property type="entry name" value="PRK05326.1-1"/>
    <property type="match status" value="1"/>
</dbReference>
<dbReference type="NCBIfam" id="NF003715">
    <property type="entry name" value="PRK05326.1-2"/>
    <property type="match status" value="1"/>
</dbReference>
<dbReference type="NCBIfam" id="NF003716">
    <property type="entry name" value="PRK05326.1-3"/>
    <property type="match status" value="1"/>
</dbReference>
<dbReference type="PANTHER" id="PTHR32507:SF7">
    <property type="entry name" value="K(+)_H(+) ANTIPORTER NHAP2"/>
    <property type="match status" value="1"/>
</dbReference>
<dbReference type="PANTHER" id="PTHR32507">
    <property type="entry name" value="NA(+)/H(+) ANTIPORTER 1"/>
    <property type="match status" value="1"/>
</dbReference>
<dbReference type="Pfam" id="PF03471">
    <property type="entry name" value="CorC_HlyC"/>
    <property type="match status" value="1"/>
</dbReference>
<dbReference type="Pfam" id="PF00999">
    <property type="entry name" value="Na_H_Exchanger"/>
    <property type="match status" value="1"/>
</dbReference>
<dbReference type="Pfam" id="PF02080">
    <property type="entry name" value="TrkA_C"/>
    <property type="match status" value="1"/>
</dbReference>
<dbReference type="SMART" id="SM01091">
    <property type="entry name" value="CorC_HlyC"/>
    <property type="match status" value="1"/>
</dbReference>
<dbReference type="SUPFAM" id="SSF56176">
    <property type="entry name" value="FAD-binding/transporter-associated domain-like"/>
    <property type="match status" value="1"/>
</dbReference>
<dbReference type="SUPFAM" id="SSF116726">
    <property type="entry name" value="TrkA C-terminal domain-like"/>
    <property type="match status" value="1"/>
</dbReference>
<dbReference type="PROSITE" id="PS51202">
    <property type="entry name" value="RCK_C"/>
    <property type="match status" value="1"/>
</dbReference>
<protein>
    <recommendedName>
        <fullName evidence="1">K(+)/H(+) antiporter NhaP2</fullName>
    </recommendedName>
    <alternativeName>
        <fullName evidence="1">Potassium/proton antiporter NhaP2</fullName>
    </alternativeName>
</protein>
<comment type="function">
    <text evidence="1">K(+)/H(+) antiporter that extrudes potassium in exchange for external protons and maintains the internal concentration of potassium under toxic levels.</text>
</comment>
<comment type="catalytic activity">
    <reaction evidence="1">
        <text>K(+)(in) + H(+)(out) = K(+)(out) + H(+)(in)</text>
        <dbReference type="Rhea" id="RHEA:29467"/>
        <dbReference type="ChEBI" id="CHEBI:15378"/>
        <dbReference type="ChEBI" id="CHEBI:29103"/>
    </reaction>
    <physiologicalReaction direction="left-to-right" evidence="1">
        <dbReference type="Rhea" id="RHEA:29468"/>
    </physiologicalReaction>
</comment>
<comment type="subcellular location">
    <subcellularLocation>
        <location evidence="1">Cell inner membrane</location>
        <topology evidence="1">Multi-pass membrane protein</topology>
    </subcellularLocation>
</comment>
<comment type="similarity">
    <text evidence="1">Belongs to the monovalent cation:proton antiporter 1 (CPA1) transporter (TC 2.A.36) family. NhaP2 subfamily.</text>
</comment>